<dbReference type="EMBL" id="AM180252">
    <property type="protein sequence ID" value="CAJ55102.1"/>
    <property type="molecule type" value="Genomic_DNA"/>
</dbReference>
<dbReference type="RefSeq" id="WP_011527131.1">
    <property type="nucleotide sequence ID" value="NC_008011.1"/>
</dbReference>
<dbReference type="SMR" id="Q1MPH5"/>
<dbReference type="STRING" id="363253.LI1048"/>
<dbReference type="KEGG" id="lip:LI1048"/>
<dbReference type="eggNOG" id="COG0576">
    <property type="taxonomic scope" value="Bacteria"/>
</dbReference>
<dbReference type="HOGENOM" id="CLU_057217_6_3_7"/>
<dbReference type="OrthoDB" id="9789811at2"/>
<dbReference type="Proteomes" id="UP000002430">
    <property type="component" value="Chromosome"/>
</dbReference>
<dbReference type="GO" id="GO:0005737">
    <property type="term" value="C:cytoplasm"/>
    <property type="evidence" value="ECO:0007669"/>
    <property type="project" value="UniProtKB-SubCell"/>
</dbReference>
<dbReference type="GO" id="GO:0000774">
    <property type="term" value="F:adenyl-nucleotide exchange factor activity"/>
    <property type="evidence" value="ECO:0007669"/>
    <property type="project" value="InterPro"/>
</dbReference>
<dbReference type="GO" id="GO:0042803">
    <property type="term" value="F:protein homodimerization activity"/>
    <property type="evidence" value="ECO:0007669"/>
    <property type="project" value="InterPro"/>
</dbReference>
<dbReference type="GO" id="GO:0051087">
    <property type="term" value="F:protein-folding chaperone binding"/>
    <property type="evidence" value="ECO:0007669"/>
    <property type="project" value="InterPro"/>
</dbReference>
<dbReference type="GO" id="GO:0051082">
    <property type="term" value="F:unfolded protein binding"/>
    <property type="evidence" value="ECO:0007669"/>
    <property type="project" value="TreeGrafter"/>
</dbReference>
<dbReference type="GO" id="GO:0006457">
    <property type="term" value="P:protein folding"/>
    <property type="evidence" value="ECO:0007669"/>
    <property type="project" value="InterPro"/>
</dbReference>
<dbReference type="CDD" id="cd00446">
    <property type="entry name" value="GrpE"/>
    <property type="match status" value="1"/>
</dbReference>
<dbReference type="FunFam" id="2.30.22.10:FF:000001">
    <property type="entry name" value="Protein GrpE"/>
    <property type="match status" value="1"/>
</dbReference>
<dbReference type="Gene3D" id="3.90.20.20">
    <property type="match status" value="1"/>
</dbReference>
<dbReference type="Gene3D" id="2.30.22.10">
    <property type="entry name" value="Head domain of nucleotide exchange factor GrpE"/>
    <property type="match status" value="1"/>
</dbReference>
<dbReference type="HAMAP" id="MF_01151">
    <property type="entry name" value="GrpE"/>
    <property type="match status" value="1"/>
</dbReference>
<dbReference type="InterPro" id="IPR000740">
    <property type="entry name" value="GrpE"/>
</dbReference>
<dbReference type="InterPro" id="IPR013805">
    <property type="entry name" value="GrpE_coiled_coil"/>
</dbReference>
<dbReference type="InterPro" id="IPR009012">
    <property type="entry name" value="GrpE_head"/>
</dbReference>
<dbReference type="PANTHER" id="PTHR21237">
    <property type="entry name" value="GRPE PROTEIN"/>
    <property type="match status" value="1"/>
</dbReference>
<dbReference type="PANTHER" id="PTHR21237:SF23">
    <property type="entry name" value="GRPE PROTEIN HOMOLOG, MITOCHONDRIAL"/>
    <property type="match status" value="1"/>
</dbReference>
<dbReference type="Pfam" id="PF01025">
    <property type="entry name" value="GrpE"/>
    <property type="match status" value="1"/>
</dbReference>
<dbReference type="PRINTS" id="PR00773">
    <property type="entry name" value="GRPEPROTEIN"/>
</dbReference>
<dbReference type="SUPFAM" id="SSF58014">
    <property type="entry name" value="Coiled-coil domain of nucleotide exchange factor GrpE"/>
    <property type="match status" value="1"/>
</dbReference>
<dbReference type="SUPFAM" id="SSF51064">
    <property type="entry name" value="Head domain of nucleotide exchange factor GrpE"/>
    <property type="match status" value="1"/>
</dbReference>
<dbReference type="PROSITE" id="PS01071">
    <property type="entry name" value="GRPE"/>
    <property type="match status" value="1"/>
</dbReference>
<reference key="1">
    <citation type="submission" date="2005-11" db="EMBL/GenBank/DDBJ databases">
        <title>The complete genome sequence of Lawsonia intracellularis: the causative agent of proliferative enteropathy.</title>
        <authorList>
            <person name="Kaur K."/>
            <person name="Zhang Q."/>
            <person name="Beckler D."/>
            <person name="Munir S."/>
            <person name="Li L."/>
            <person name="Kinsley K."/>
            <person name="Herron L."/>
            <person name="Peterson A."/>
            <person name="May B."/>
            <person name="Singh S."/>
            <person name="Gebhart C."/>
            <person name="Kapur V."/>
        </authorList>
    </citation>
    <scope>NUCLEOTIDE SEQUENCE [LARGE SCALE GENOMIC DNA]</scope>
    <source>
        <strain>PHE/MN1-00</strain>
    </source>
</reference>
<sequence length="189" mass="21719">MTDHTPLQPKHEITDQADQDTSAEMLVEEEDKKEIGPNYITEEEAQEIRLRALAEMENFKKRLQKDHDEQIRYAIDNLLTDMLPVLDSLDLAIQYGSNDDACKDILMGVSMTRKLFLDTLKQYGVTVLGEINEPFNPELHEAIAHEEREDIPEGHVSTLHQRGYQLYERLLRPAKVSVSSNKNNSNTNK</sequence>
<protein>
    <recommendedName>
        <fullName evidence="1">Protein GrpE</fullName>
    </recommendedName>
    <alternativeName>
        <fullName evidence="1">HSP-70 cofactor</fullName>
    </alternativeName>
</protein>
<feature type="chain" id="PRO_1000164199" description="Protein GrpE">
    <location>
        <begin position="1"/>
        <end position="189"/>
    </location>
</feature>
<feature type="region of interest" description="Disordered" evidence="2">
    <location>
        <begin position="1"/>
        <end position="23"/>
    </location>
</feature>
<feature type="compositionally biased region" description="Basic and acidic residues" evidence="2">
    <location>
        <begin position="1"/>
        <end position="14"/>
    </location>
</feature>
<gene>
    <name evidence="1" type="primary">grpE</name>
    <name type="ordered locus">LI1048</name>
</gene>
<comment type="function">
    <text evidence="1">Participates actively in the response to hyperosmotic and heat shock by preventing the aggregation of stress-denatured proteins, in association with DnaK and GrpE. It is the nucleotide exchange factor for DnaK and may function as a thermosensor. Unfolded proteins bind initially to DnaJ; upon interaction with the DnaJ-bound protein, DnaK hydrolyzes its bound ATP, resulting in the formation of a stable complex. GrpE releases ADP from DnaK; ATP binding to DnaK triggers the release of the substrate protein, thus completing the reaction cycle. Several rounds of ATP-dependent interactions between DnaJ, DnaK and GrpE are required for fully efficient folding.</text>
</comment>
<comment type="subunit">
    <text evidence="1">Homodimer.</text>
</comment>
<comment type="subcellular location">
    <subcellularLocation>
        <location evidence="1">Cytoplasm</location>
    </subcellularLocation>
</comment>
<comment type="similarity">
    <text evidence="1">Belongs to the GrpE family.</text>
</comment>
<accession>Q1MPH5</accession>
<keyword id="KW-0143">Chaperone</keyword>
<keyword id="KW-0963">Cytoplasm</keyword>
<keyword id="KW-1185">Reference proteome</keyword>
<keyword id="KW-0346">Stress response</keyword>
<organism>
    <name type="scientific">Lawsonia intracellularis (strain PHE/MN1-00)</name>
    <dbReference type="NCBI Taxonomy" id="363253"/>
    <lineage>
        <taxon>Bacteria</taxon>
        <taxon>Pseudomonadati</taxon>
        <taxon>Thermodesulfobacteriota</taxon>
        <taxon>Desulfovibrionia</taxon>
        <taxon>Desulfovibrionales</taxon>
        <taxon>Desulfovibrionaceae</taxon>
        <taxon>Lawsonia</taxon>
    </lineage>
</organism>
<evidence type="ECO:0000255" key="1">
    <source>
        <dbReference type="HAMAP-Rule" id="MF_01151"/>
    </source>
</evidence>
<evidence type="ECO:0000256" key="2">
    <source>
        <dbReference type="SAM" id="MobiDB-lite"/>
    </source>
</evidence>
<proteinExistence type="inferred from homology"/>
<name>GRPE_LAWIP</name>